<proteinExistence type="inferred from homology"/>
<evidence type="ECO:0000255" key="1">
    <source>
        <dbReference type="HAMAP-Rule" id="MF_01369"/>
    </source>
</evidence>
<evidence type="ECO:0000305" key="2"/>
<organism>
    <name type="scientific">Granulibacter bethesdensis (strain ATCC BAA-1260 / CGDNIH1)</name>
    <dbReference type="NCBI Taxonomy" id="391165"/>
    <lineage>
        <taxon>Bacteria</taxon>
        <taxon>Pseudomonadati</taxon>
        <taxon>Pseudomonadota</taxon>
        <taxon>Alphaproteobacteria</taxon>
        <taxon>Acetobacterales</taxon>
        <taxon>Acetobacteraceae</taxon>
        <taxon>Granulibacter</taxon>
    </lineage>
</organism>
<accession>Q0BUP8</accession>
<dbReference type="EMBL" id="CP000394">
    <property type="protein sequence ID" value="ABI61454.1"/>
    <property type="molecule type" value="Genomic_DNA"/>
</dbReference>
<dbReference type="SMR" id="Q0BUP8"/>
<dbReference type="STRING" id="391165.GbCGDNIH1_0556"/>
<dbReference type="KEGG" id="gbe:GbCGDNIH1_0556"/>
<dbReference type="eggNOG" id="COG0089">
    <property type="taxonomic scope" value="Bacteria"/>
</dbReference>
<dbReference type="HOGENOM" id="CLU_037562_3_1_5"/>
<dbReference type="Proteomes" id="UP000001963">
    <property type="component" value="Chromosome"/>
</dbReference>
<dbReference type="GO" id="GO:1990904">
    <property type="term" value="C:ribonucleoprotein complex"/>
    <property type="evidence" value="ECO:0007669"/>
    <property type="project" value="UniProtKB-KW"/>
</dbReference>
<dbReference type="GO" id="GO:0005840">
    <property type="term" value="C:ribosome"/>
    <property type="evidence" value="ECO:0007669"/>
    <property type="project" value="UniProtKB-KW"/>
</dbReference>
<dbReference type="GO" id="GO:0019843">
    <property type="term" value="F:rRNA binding"/>
    <property type="evidence" value="ECO:0007669"/>
    <property type="project" value="UniProtKB-UniRule"/>
</dbReference>
<dbReference type="GO" id="GO:0003735">
    <property type="term" value="F:structural constituent of ribosome"/>
    <property type="evidence" value="ECO:0007669"/>
    <property type="project" value="InterPro"/>
</dbReference>
<dbReference type="GO" id="GO:0006412">
    <property type="term" value="P:translation"/>
    <property type="evidence" value="ECO:0007669"/>
    <property type="project" value="UniProtKB-UniRule"/>
</dbReference>
<dbReference type="FunFam" id="3.30.70.330:FF:000001">
    <property type="entry name" value="50S ribosomal protein L23"/>
    <property type="match status" value="1"/>
</dbReference>
<dbReference type="Gene3D" id="3.30.70.330">
    <property type="match status" value="1"/>
</dbReference>
<dbReference type="HAMAP" id="MF_01369_B">
    <property type="entry name" value="Ribosomal_uL23_B"/>
    <property type="match status" value="1"/>
</dbReference>
<dbReference type="InterPro" id="IPR012677">
    <property type="entry name" value="Nucleotide-bd_a/b_plait_sf"/>
</dbReference>
<dbReference type="InterPro" id="IPR013025">
    <property type="entry name" value="Ribosomal_uL23-like"/>
</dbReference>
<dbReference type="InterPro" id="IPR012678">
    <property type="entry name" value="Ribosomal_uL23/eL15/eS24_sf"/>
</dbReference>
<dbReference type="NCBIfam" id="NF004359">
    <property type="entry name" value="PRK05738.1-3"/>
    <property type="match status" value="1"/>
</dbReference>
<dbReference type="NCBIfam" id="NF004360">
    <property type="entry name" value="PRK05738.1-5"/>
    <property type="match status" value="1"/>
</dbReference>
<dbReference type="NCBIfam" id="NF004363">
    <property type="entry name" value="PRK05738.2-4"/>
    <property type="match status" value="1"/>
</dbReference>
<dbReference type="PANTHER" id="PTHR11620">
    <property type="entry name" value="60S RIBOSOMAL PROTEIN L23A"/>
    <property type="match status" value="1"/>
</dbReference>
<dbReference type="Pfam" id="PF00276">
    <property type="entry name" value="Ribosomal_L23"/>
    <property type="match status" value="1"/>
</dbReference>
<dbReference type="SUPFAM" id="SSF54189">
    <property type="entry name" value="Ribosomal proteins S24e, L23 and L15e"/>
    <property type="match status" value="1"/>
</dbReference>
<reference key="1">
    <citation type="journal article" date="2007" name="J. Bacteriol.">
        <title>Genome sequence analysis of the emerging human pathogenic acetic acid bacterium Granulibacter bethesdensis.</title>
        <authorList>
            <person name="Greenberg D.E."/>
            <person name="Porcella S.F."/>
            <person name="Zelazny A.M."/>
            <person name="Virtaneva K."/>
            <person name="Sturdevant D.E."/>
            <person name="Kupko J.J. III"/>
            <person name="Barbian K.D."/>
            <person name="Babar A."/>
            <person name="Dorward D.W."/>
            <person name="Holland S.M."/>
        </authorList>
    </citation>
    <scope>NUCLEOTIDE SEQUENCE [LARGE SCALE GENOMIC DNA]</scope>
    <source>
        <strain>ATCC BAA-1260 / CGDNIH1</strain>
    </source>
</reference>
<sequence>MSSPQKTSLAARRRAERMSREAMYEVIRSPLITEKATLLSERSQVVFRVAIDATKPEIKAAVEGLFGVKVIGVNTLVNKGKTKRFRGRPGQRSDVKKAYVQLVAGQAIDLTAKLA</sequence>
<comment type="function">
    <text evidence="1">One of the early assembly proteins it binds 23S rRNA. One of the proteins that surrounds the polypeptide exit tunnel on the outside of the ribosome. Forms the main docking site for trigger factor binding to the ribosome.</text>
</comment>
<comment type="subunit">
    <text evidence="1">Part of the 50S ribosomal subunit. Contacts protein L29, and trigger factor when it is bound to the ribosome.</text>
</comment>
<comment type="similarity">
    <text evidence="1">Belongs to the universal ribosomal protein uL23 family.</text>
</comment>
<name>RL23_GRABC</name>
<feature type="chain" id="PRO_0000272755" description="Large ribosomal subunit protein uL23">
    <location>
        <begin position="1"/>
        <end position="115"/>
    </location>
</feature>
<gene>
    <name evidence="1" type="primary">rplW</name>
    <name type="ordered locus">GbCGDNIH1_0556</name>
</gene>
<protein>
    <recommendedName>
        <fullName evidence="1">Large ribosomal subunit protein uL23</fullName>
    </recommendedName>
    <alternativeName>
        <fullName evidence="2">50S ribosomal protein L23</fullName>
    </alternativeName>
</protein>
<keyword id="KW-1185">Reference proteome</keyword>
<keyword id="KW-0687">Ribonucleoprotein</keyword>
<keyword id="KW-0689">Ribosomal protein</keyword>
<keyword id="KW-0694">RNA-binding</keyword>
<keyword id="KW-0699">rRNA-binding</keyword>